<feature type="signal peptide" evidence="5">
    <location>
        <begin position="1"/>
        <end position="19"/>
    </location>
</feature>
<feature type="chain" id="PRO_0000014657" description="CD83 antigen">
    <location>
        <begin position="20"/>
        <end position="205"/>
    </location>
</feature>
<feature type="topological domain" description="Extracellular" evidence="2">
    <location>
        <begin position="20"/>
        <end position="144"/>
    </location>
</feature>
<feature type="transmembrane region" description="Helical" evidence="2">
    <location>
        <begin position="145"/>
        <end position="166"/>
    </location>
</feature>
<feature type="topological domain" description="Cytoplasmic" evidence="2">
    <location>
        <begin position="167"/>
        <end position="205"/>
    </location>
</feature>
<feature type="domain" description="Ig-like V-type">
    <location>
        <begin position="20"/>
        <end position="114"/>
    </location>
</feature>
<feature type="region of interest" description="Disordered" evidence="3">
    <location>
        <begin position="60"/>
        <end position="81"/>
    </location>
</feature>
<feature type="compositionally biased region" description="Basic and acidic residues" evidence="3">
    <location>
        <begin position="60"/>
        <end position="69"/>
    </location>
</feature>
<feature type="glycosylation site" description="N-linked (GlcNAc...) asparagine" evidence="6">
    <location>
        <position position="79"/>
    </location>
</feature>
<feature type="glycosylation site" description="N-linked (GlcNAc...) asparagine" evidence="2">
    <location>
        <position position="96"/>
    </location>
</feature>
<feature type="glycosylation site" description="N-linked (GlcNAc...) asparagine" evidence="2">
    <location>
        <position position="117"/>
    </location>
</feature>
<feature type="disulfide bond" evidence="8">
    <location>
        <begin position="35"/>
        <end position="107"/>
    </location>
</feature>
<feature type="sequence variant" id="VAR_033609" description="In dbSNP:rs2230193.">
    <original>R</original>
    <variation>Q</variation>
    <location>
        <position position="182"/>
    </location>
</feature>
<feature type="strand" evidence="13">
    <location>
        <begin position="22"/>
        <end position="25"/>
    </location>
</feature>
<feature type="strand" evidence="13">
    <location>
        <begin position="31"/>
        <end position="33"/>
    </location>
</feature>
<feature type="strand" evidence="13">
    <location>
        <begin position="46"/>
        <end position="52"/>
    </location>
</feature>
<feature type="strand" evidence="13">
    <location>
        <begin position="92"/>
        <end position="94"/>
    </location>
</feature>
<feature type="helix" evidence="13">
    <location>
        <begin position="99"/>
        <end position="101"/>
    </location>
</feature>
<feature type="strand" evidence="13">
    <location>
        <begin position="103"/>
        <end position="110"/>
    </location>
</feature>
<feature type="strand" evidence="14">
    <location>
        <begin position="112"/>
        <end position="115"/>
    </location>
</feature>
<feature type="strand" evidence="13">
    <location>
        <begin position="117"/>
        <end position="126"/>
    </location>
</feature>
<accession>Q01151</accession>
<accession>Q5THX9</accession>
<organism>
    <name type="scientific">Homo sapiens</name>
    <name type="common">Human</name>
    <dbReference type="NCBI Taxonomy" id="9606"/>
    <lineage>
        <taxon>Eukaryota</taxon>
        <taxon>Metazoa</taxon>
        <taxon>Chordata</taxon>
        <taxon>Craniata</taxon>
        <taxon>Vertebrata</taxon>
        <taxon>Euteleostomi</taxon>
        <taxon>Mammalia</taxon>
        <taxon>Eutheria</taxon>
        <taxon>Euarchontoglires</taxon>
        <taxon>Primates</taxon>
        <taxon>Haplorrhini</taxon>
        <taxon>Catarrhini</taxon>
        <taxon>Hominidae</taxon>
        <taxon>Homo</taxon>
    </lineage>
</organism>
<reference key="1">
    <citation type="journal article" date="1992" name="J. Immunol.">
        <title>A novel cell-surface molecule expressed by human interdigitating reticulum cells, Langerhans cells, and activated lymphocytes is a new member of the Ig superfamily.</title>
        <authorList>
            <person name="Zhou L.-J."/>
            <person name="Schwarting R."/>
            <person name="Smith H.M."/>
            <person name="Tedder T.F."/>
        </authorList>
    </citation>
    <scope>NUCLEOTIDE SEQUENCE [MRNA]</scope>
    <source>
        <tissue>Tonsil</tissue>
    </source>
</reference>
<reference key="2">
    <citation type="journal article" date="1993" name="Blood">
        <title>Subtractive cDNA cloning of a novel member of the Ig gene superfamily expressed at high levels in activated B lymphocytes.</title>
        <authorList>
            <person name="Kozlow E.J."/>
            <person name="Wilson G.L."/>
            <person name="Fox C.H."/>
            <person name="Kehrl J.H."/>
        </authorList>
    </citation>
    <scope>NUCLEOTIDE SEQUENCE [MRNA]</scope>
    <source>
        <tissue>B-cell</tissue>
    </source>
</reference>
<reference key="3">
    <citation type="submission" date="2004-06" db="EMBL/GenBank/DDBJ databases">
        <title>Cloning of human full open reading frames in Gateway(TM) system entry vector (pDONR201).</title>
        <authorList>
            <person name="Ebert L."/>
            <person name="Schick M."/>
            <person name="Neubert P."/>
            <person name="Schatten R."/>
            <person name="Henze S."/>
            <person name="Korn B."/>
        </authorList>
    </citation>
    <scope>NUCLEOTIDE SEQUENCE [LARGE SCALE MRNA]</scope>
</reference>
<reference key="4">
    <citation type="journal article" date="2003" name="Nature">
        <title>The DNA sequence and analysis of human chromosome 6.</title>
        <authorList>
            <person name="Mungall A.J."/>
            <person name="Palmer S.A."/>
            <person name="Sims S.K."/>
            <person name="Edwards C.A."/>
            <person name="Ashurst J.L."/>
            <person name="Wilming L."/>
            <person name="Jones M.C."/>
            <person name="Horton R."/>
            <person name="Hunt S.E."/>
            <person name="Scott C.E."/>
            <person name="Gilbert J.G.R."/>
            <person name="Clamp M.E."/>
            <person name="Bethel G."/>
            <person name="Milne S."/>
            <person name="Ainscough R."/>
            <person name="Almeida J.P."/>
            <person name="Ambrose K.D."/>
            <person name="Andrews T.D."/>
            <person name="Ashwell R.I.S."/>
            <person name="Babbage A.K."/>
            <person name="Bagguley C.L."/>
            <person name="Bailey J."/>
            <person name="Banerjee R."/>
            <person name="Barker D.J."/>
            <person name="Barlow K.F."/>
            <person name="Bates K."/>
            <person name="Beare D.M."/>
            <person name="Beasley H."/>
            <person name="Beasley O."/>
            <person name="Bird C.P."/>
            <person name="Blakey S.E."/>
            <person name="Bray-Allen S."/>
            <person name="Brook J."/>
            <person name="Brown A.J."/>
            <person name="Brown J.Y."/>
            <person name="Burford D.C."/>
            <person name="Burrill W."/>
            <person name="Burton J."/>
            <person name="Carder C."/>
            <person name="Carter N.P."/>
            <person name="Chapman J.C."/>
            <person name="Clark S.Y."/>
            <person name="Clark G."/>
            <person name="Clee C.M."/>
            <person name="Clegg S."/>
            <person name="Cobley V."/>
            <person name="Collier R.E."/>
            <person name="Collins J.E."/>
            <person name="Colman L.K."/>
            <person name="Corby N.R."/>
            <person name="Coville G.J."/>
            <person name="Culley K.M."/>
            <person name="Dhami P."/>
            <person name="Davies J."/>
            <person name="Dunn M."/>
            <person name="Earthrowl M.E."/>
            <person name="Ellington A.E."/>
            <person name="Evans K.A."/>
            <person name="Faulkner L."/>
            <person name="Francis M.D."/>
            <person name="Frankish A."/>
            <person name="Frankland J."/>
            <person name="French L."/>
            <person name="Garner P."/>
            <person name="Garnett J."/>
            <person name="Ghori M.J."/>
            <person name="Gilby L.M."/>
            <person name="Gillson C.J."/>
            <person name="Glithero R.J."/>
            <person name="Grafham D.V."/>
            <person name="Grant M."/>
            <person name="Gribble S."/>
            <person name="Griffiths C."/>
            <person name="Griffiths M.N.D."/>
            <person name="Hall R."/>
            <person name="Halls K.S."/>
            <person name="Hammond S."/>
            <person name="Harley J.L."/>
            <person name="Hart E.A."/>
            <person name="Heath P.D."/>
            <person name="Heathcott R."/>
            <person name="Holmes S.J."/>
            <person name="Howden P.J."/>
            <person name="Howe K.L."/>
            <person name="Howell G.R."/>
            <person name="Huckle E."/>
            <person name="Humphray S.J."/>
            <person name="Humphries M.D."/>
            <person name="Hunt A.R."/>
            <person name="Johnson C.M."/>
            <person name="Joy A.A."/>
            <person name="Kay M."/>
            <person name="Keenan S.J."/>
            <person name="Kimberley A.M."/>
            <person name="King A."/>
            <person name="Laird G.K."/>
            <person name="Langford C."/>
            <person name="Lawlor S."/>
            <person name="Leongamornlert D.A."/>
            <person name="Leversha M."/>
            <person name="Lloyd C.R."/>
            <person name="Lloyd D.M."/>
            <person name="Loveland J.E."/>
            <person name="Lovell J."/>
            <person name="Martin S."/>
            <person name="Mashreghi-Mohammadi M."/>
            <person name="Maslen G.L."/>
            <person name="Matthews L."/>
            <person name="McCann O.T."/>
            <person name="McLaren S.J."/>
            <person name="McLay K."/>
            <person name="McMurray A."/>
            <person name="Moore M.J.F."/>
            <person name="Mullikin J.C."/>
            <person name="Niblett D."/>
            <person name="Nickerson T."/>
            <person name="Novik K.L."/>
            <person name="Oliver K."/>
            <person name="Overton-Larty E.K."/>
            <person name="Parker A."/>
            <person name="Patel R."/>
            <person name="Pearce A.V."/>
            <person name="Peck A.I."/>
            <person name="Phillimore B.J.C.T."/>
            <person name="Phillips S."/>
            <person name="Plumb R.W."/>
            <person name="Porter K.M."/>
            <person name="Ramsey Y."/>
            <person name="Ranby S.A."/>
            <person name="Rice C.M."/>
            <person name="Ross M.T."/>
            <person name="Searle S.M."/>
            <person name="Sehra H.K."/>
            <person name="Sheridan E."/>
            <person name="Skuce C.D."/>
            <person name="Smith S."/>
            <person name="Smith M."/>
            <person name="Spraggon L."/>
            <person name="Squares S.L."/>
            <person name="Steward C.A."/>
            <person name="Sycamore N."/>
            <person name="Tamlyn-Hall G."/>
            <person name="Tester J."/>
            <person name="Theaker A.J."/>
            <person name="Thomas D.W."/>
            <person name="Thorpe A."/>
            <person name="Tracey A."/>
            <person name="Tromans A."/>
            <person name="Tubby B."/>
            <person name="Wall M."/>
            <person name="Wallis J.M."/>
            <person name="West A.P."/>
            <person name="White S.S."/>
            <person name="Whitehead S.L."/>
            <person name="Whittaker H."/>
            <person name="Wild A."/>
            <person name="Willey D.J."/>
            <person name="Wilmer T.E."/>
            <person name="Wood J.M."/>
            <person name="Wray P.W."/>
            <person name="Wyatt J.C."/>
            <person name="Young L."/>
            <person name="Younger R.M."/>
            <person name="Bentley D.R."/>
            <person name="Coulson A."/>
            <person name="Durbin R.M."/>
            <person name="Hubbard T."/>
            <person name="Sulston J.E."/>
            <person name="Dunham I."/>
            <person name="Rogers J."/>
            <person name="Beck S."/>
        </authorList>
    </citation>
    <scope>NUCLEOTIDE SEQUENCE [LARGE SCALE GENOMIC DNA]</scope>
</reference>
<reference key="5">
    <citation type="journal article" date="2004" name="Genome Res.">
        <title>The status, quality, and expansion of the NIH full-length cDNA project: the Mammalian Gene Collection (MGC).</title>
        <authorList>
            <consortium name="The MGC Project Team"/>
        </authorList>
    </citation>
    <scope>NUCLEOTIDE SEQUENCE [LARGE SCALE MRNA]</scope>
    <source>
        <tissue>Brain</tissue>
    </source>
</reference>
<reference key="6">
    <citation type="journal article" date="2002" name="Protein Expr. Purif.">
        <title>Overexpression, purification, and biochemical characterization of the extracellular human CD83 domain and generation of monoclonal antibodies.</title>
        <authorList>
            <person name="Lechmann M."/>
            <person name="Kremmer E."/>
            <person name="Sticht H."/>
            <person name="Steinkasserer A."/>
        </authorList>
    </citation>
    <scope>TISSUE SPECIFICITY</scope>
    <scope>GLYCOSYLATION</scope>
</reference>
<reference key="7">
    <citation type="journal article" date="2004" name="Protein Sci.">
        <title>Signal peptide prediction based on analysis of experimentally verified cleavage sites.</title>
        <authorList>
            <person name="Zhang Z."/>
            <person name="Henzel W.J."/>
        </authorList>
    </citation>
    <scope>PROTEIN SEQUENCE OF 20-34</scope>
</reference>
<reference key="8">
    <citation type="journal article" date="2008" name="Proc. Natl. Acad. Sci. U.S.A.">
        <title>A quantitative atlas of mitotic phosphorylation.</title>
        <authorList>
            <person name="Dephoure N."/>
            <person name="Zhou C."/>
            <person name="Villen J."/>
            <person name="Beausoleil S.A."/>
            <person name="Bakalarski C.E."/>
            <person name="Elledge S.J."/>
            <person name="Gygi S.P."/>
        </authorList>
    </citation>
    <scope>IDENTIFICATION BY MASS SPECTROMETRY [LARGE SCALE ANALYSIS]</scope>
    <source>
        <tissue>Cervix carcinoma</tissue>
    </source>
</reference>
<reference key="9">
    <citation type="journal article" date="2009" name="Nat. Biotechnol.">
        <title>Mass-spectrometric identification and relative quantification of N-linked cell surface glycoproteins.</title>
        <authorList>
            <person name="Wollscheid B."/>
            <person name="Bausch-Fluck D."/>
            <person name="Henderson C."/>
            <person name="O'Brien R."/>
            <person name="Bibel M."/>
            <person name="Schiess R."/>
            <person name="Aebersold R."/>
            <person name="Watts J.D."/>
        </authorList>
    </citation>
    <scope>GLYCOSYLATION [LARGE SCALE ANALYSIS] AT ASN-79</scope>
    <source>
        <tissue>Leukemic T-cell</tissue>
    </source>
</reference>
<reference key="10">
    <citation type="journal article" date="2011" name="J. Exp. Med.">
        <title>CD83 increases MHC II and CD86 on dendritic cells by opposing IL-10-driven MARCH1-mediated ubiquitination and degradation.</title>
        <authorList>
            <person name="Tze L.E."/>
            <person name="Horikawa K."/>
            <person name="Domaschenz H."/>
            <person name="Howard D.R."/>
            <person name="Roots C.M."/>
            <person name="Rigby R.J."/>
            <person name="Way D.A."/>
            <person name="Ohmura-Hoshino M."/>
            <person name="Ishido S."/>
            <person name="Andoniou C.E."/>
            <person name="Degli-Esposti M.A."/>
            <person name="Goodnow C.C."/>
        </authorList>
    </citation>
    <scope>FUNCTION</scope>
    <scope>INTERACTION WITH MARCHF1</scope>
</reference>
<reference evidence="9 10 11 12" key="11">
    <citation type="journal article" date="2017" name="J. Mol. Biol.">
        <title>Crystal Structure of the Extracellular Domain of the Human Dendritic Cell Surface Marker CD83.</title>
        <authorList>
            <person name="Heilingloh C.S."/>
            <person name="Klingl S."/>
            <person name="Egerer-Sieber C."/>
            <person name="Schmid B."/>
            <person name="Weiler S."/>
            <person name="Muhl-Zurbes P."/>
            <person name="Hofmann J."/>
            <person name="Stump J.D."/>
            <person name="Sticht H."/>
            <person name="Kummer M."/>
            <person name="Steinkasserer A."/>
            <person name="Muller Y.A."/>
        </authorList>
    </citation>
    <scope>X-RAY CRYSTALLOGRAPHY (1.70 ANGSTROMS) OF 20-131</scope>
    <scope>DISULFIDE BONDS</scope>
    <scope>SUBUNIT</scope>
</reference>
<evidence type="ECO:0000250" key="1">
    <source>
        <dbReference type="UniProtKB" id="O88324"/>
    </source>
</evidence>
<evidence type="ECO:0000255" key="2"/>
<evidence type="ECO:0000256" key="3">
    <source>
        <dbReference type="SAM" id="MobiDB-lite"/>
    </source>
</evidence>
<evidence type="ECO:0000269" key="4">
    <source>
    </source>
</evidence>
<evidence type="ECO:0000269" key="5">
    <source>
    </source>
</evidence>
<evidence type="ECO:0000269" key="6">
    <source>
    </source>
</evidence>
<evidence type="ECO:0000269" key="7">
    <source>
    </source>
</evidence>
<evidence type="ECO:0000269" key="8">
    <source>
    </source>
</evidence>
<evidence type="ECO:0007744" key="9">
    <source>
        <dbReference type="PDB" id="5MIX"/>
    </source>
</evidence>
<evidence type="ECO:0007744" key="10">
    <source>
        <dbReference type="PDB" id="5MJ0"/>
    </source>
</evidence>
<evidence type="ECO:0007744" key="11">
    <source>
        <dbReference type="PDB" id="5MJ1"/>
    </source>
</evidence>
<evidence type="ECO:0007744" key="12">
    <source>
        <dbReference type="PDB" id="5MJ2"/>
    </source>
</evidence>
<evidence type="ECO:0007829" key="13">
    <source>
        <dbReference type="PDB" id="5MIX"/>
    </source>
</evidence>
<evidence type="ECO:0007829" key="14">
    <source>
        <dbReference type="PDB" id="5MJ0"/>
    </source>
</evidence>
<dbReference type="EMBL" id="Z11697">
    <property type="protein sequence ID" value="CAA77755.1"/>
    <property type="molecule type" value="mRNA"/>
</dbReference>
<dbReference type="EMBL" id="S53354">
    <property type="protein sequence ID" value="AAB25085.1"/>
    <property type="molecule type" value="mRNA"/>
</dbReference>
<dbReference type="EMBL" id="CR457019">
    <property type="protein sequence ID" value="CAG33300.1"/>
    <property type="molecule type" value="mRNA"/>
</dbReference>
<dbReference type="EMBL" id="AL133259">
    <property type="status" value="NOT_ANNOTATED_CDS"/>
    <property type="molecule type" value="Genomic_DNA"/>
</dbReference>
<dbReference type="EMBL" id="AL022396">
    <property type="status" value="NOT_ANNOTATED_CDS"/>
    <property type="molecule type" value="Genomic_DNA"/>
</dbReference>
<dbReference type="EMBL" id="BC030830">
    <property type="protein sequence ID" value="AAH30830.1"/>
    <property type="molecule type" value="mRNA"/>
</dbReference>
<dbReference type="CCDS" id="CCDS4532.1"/>
<dbReference type="PIR" id="A48929">
    <property type="entry name" value="A48929"/>
</dbReference>
<dbReference type="RefSeq" id="NP_001035370.1">
    <property type="nucleotide sequence ID" value="NM_001040280.1"/>
</dbReference>
<dbReference type="RefSeq" id="NP_001238830.1">
    <property type="nucleotide sequence ID" value="NM_001251901.1"/>
</dbReference>
<dbReference type="RefSeq" id="NP_004224.1">
    <property type="nucleotide sequence ID" value="NM_004233.4"/>
</dbReference>
<dbReference type="PDB" id="5MIX">
    <property type="method" value="X-ray"/>
    <property type="resolution" value="1.70 A"/>
    <property type="chains" value="A=20-131"/>
</dbReference>
<dbReference type="PDB" id="5MJ0">
    <property type="method" value="X-ray"/>
    <property type="resolution" value="3.20 A"/>
    <property type="chains" value="A/B=20-131"/>
</dbReference>
<dbReference type="PDB" id="5MJ1">
    <property type="method" value="X-ray"/>
    <property type="resolution" value="1.80 A"/>
    <property type="chains" value="A=20-131"/>
</dbReference>
<dbReference type="PDB" id="5MJ2">
    <property type="method" value="X-ray"/>
    <property type="resolution" value="1.98 A"/>
    <property type="chains" value="A=20-131"/>
</dbReference>
<dbReference type="PDBsum" id="5MIX"/>
<dbReference type="PDBsum" id="5MJ0"/>
<dbReference type="PDBsum" id="5MJ1"/>
<dbReference type="PDBsum" id="5MJ2"/>
<dbReference type="SMR" id="Q01151"/>
<dbReference type="BioGRID" id="114721">
    <property type="interactions" value="70"/>
</dbReference>
<dbReference type="FunCoup" id="Q01151">
    <property type="interactions" value="914"/>
</dbReference>
<dbReference type="IntAct" id="Q01151">
    <property type="interactions" value="64"/>
</dbReference>
<dbReference type="STRING" id="9606.ENSP00000368450"/>
<dbReference type="UniLectin" id="Q01151"/>
<dbReference type="GlyCosmos" id="Q01151">
    <property type="glycosylation" value="3 sites, No reported glycans"/>
</dbReference>
<dbReference type="GlyGen" id="Q01151">
    <property type="glycosylation" value="3 sites, 2 N-linked glycans (2 sites)"/>
</dbReference>
<dbReference type="iPTMnet" id="Q01151"/>
<dbReference type="PhosphoSitePlus" id="Q01151"/>
<dbReference type="SwissPalm" id="Q01151"/>
<dbReference type="BioMuta" id="CD83"/>
<dbReference type="DMDM" id="232223"/>
<dbReference type="jPOST" id="Q01151"/>
<dbReference type="MassIVE" id="Q01151"/>
<dbReference type="PaxDb" id="9606-ENSP00000368450"/>
<dbReference type="PeptideAtlas" id="Q01151"/>
<dbReference type="ProteomicsDB" id="57923"/>
<dbReference type="Pumba" id="Q01151"/>
<dbReference type="ABCD" id="Q01151">
    <property type="antibodies" value="22 sequenced antibodies"/>
</dbReference>
<dbReference type="Antibodypedia" id="3744">
    <property type="antibodies" value="1011 antibodies from 44 providers"/>
</dbReference>
<dbReference type="DNASU" id="9308"/>
<dbReference type="Ensembl" id="ENST00000379153.4">
    <property type="protein sequence ID" value="ENSP00000368450.3"/>
    <property type="gene ID" value="ENSG00000112149.11"/>
</dbReference>
<dbReference type="GeneID" id="9308"/>
<dbReference type="KEGG" id="hsa:9308"/>
<dbReference type="MANE-Select" id="ENST00000379153.4">
    <property type="protein sequence ID" value="ENSP00000368450.3"/>
    <property type="RefSeq nucleotide sequence ID" value="NM_004233.4"/>
    <property type="RefSeq protein sequence ID" value="NP_004224.1"/>
</dbReference>
<dbReference type="UCSC" id="uc003nbi.4">
    <property type="organism name" value="human"/>
</dbReference>
<dbReference type="AGR" id="HGNC:1703"/>
<dbReference type="CTD" id="9308"/>
<dbReference type="DisGeNET" id="9308"/>
<dbReference type="GeneCards" id="CD83"/>
<dbReference type="HGNC" id="HGNC:1703">
    <property type="gene designation" value="CD83"/>
</dbReference>
<dbReference type="HPA" id="ENSG00000112149">
    <property type="expression patterns" value="Tissue enhanced (bone)"/>
</dbReference>
<dbReference type="MIM" id="604534">
    <property type="type" value="gene"/>
</dbReference>
<dbReference type="neXtProt" id="NX_Q01151"/>
<dbReference type="OpenTargets" id="ENSG00000112149"/>
<dbReference type="PharmGKB" id="PA26241"/>
<dbReference type="VEuPathDB" id="HostDB:ENSG00000112149"/>
<dbReference type="eggNOG" id="ENOG502S7FP">
    <property type="taxonomic scope" value="Eukaryota"/>
</dbReference>
<dbReference type="GeneTree" id="ENSGT00390000007302"/>
<dbReference type="HOGENOM" id="CLU_099481_0_0_1"/>
<dbReference type="InParanoid" id="Q01151"/>
<dbReference type="OMA" id="SWYKMAG"/>
<dbReference type="OrthoDB" id="9422899at2759"/>
<dbReference type="PAN-GO" id="Q01151">
    <property type="GO annotations" value="0 GO annotations based on evolutionary models"/>
</dbReference>
<dbReference type="PhylomeDB" id="Q01151"/>
<dbReference type="TreeFam" id="TF337861"/>
<dbReference type="PathwayCommons" id="Q01151"/>
<dbReference type="SignaLink" id="Q01151"/>
<dbReference type="SIGNOR" id="Q01151"/>
<dbReference type="BioGRID-ORCS" id="9308">
    <property type="hits" value="12 hits in 1155 CRISPR screens"/>
</dbReference>
<dbReference type="ChiTaRS" id="CD83">
    <property type="organism name" value="human"/>
</dbReference>
<dbReference type="GeneWiki" id="CD83"/>
<dbReference type="GenomeRNAi" id="9308"/>
<dbReference type="Pharos" id="Q01151">
    <property type="development level" value="Tbio"/>
</dbReference>
<dbReference type="PRO" id="PR:Q01151"/>
<dbReference type="Proteomes" id="UP000005640">
    <property type="component" value="Chromosome 6"/>
</dbReference>
<dbReference type="RNAct" id="Q01151">
    <property type="molecule type" value="protein"/>
</dbReference>
<dbReference type="Bgee" id="ENSG00000112149">
    <property type="expression patterns" value="Expressed in adrenal tissue and 192 other cell types or tissues"/>
</dbReference>
<dbReference type="ExpressionAtlas" id="Q01151">
    <property type="expression patterns" value="baseline and differential"/>
</dbReference>
<dbReference type="GO" id="GO:0009897">
    <property type="term" value="C:external side of plasma membrane"/>
    <property type="evidence" value="ECO:0007669"/>
    <property type="project" value="Ensembl"/>
</dbReference>
<dbReference type="GO" id="GO:0005886">
    <property type="term" value="C:plasma membrane"/>
    <property type="evidence" value="ECO:0000304"/>
    <property type="project" value="ProtInc"/>
</dbReference>
<dbReference type="GO" id="GO:0043367">
    <property type="term" value="P:CD4-positive, alpha-beta T cell differentiation"/>
    <property type="evidence" value="ECO:0007669"/>
    <property type="project" value="Ensembl"/>
</dbReference>
<dbReference type="GO" id="GO:0006952">
    <property type="term" value="P:defense response"/>
    <property type="evidence" value="ECO:0000304"/>
    <property type="project" value="ProtInc"/>
</dbReference>
<dbReference type="GO" id="GO:0006959">
    <property type="term" value="P:humoral immune response"/>
    <property type="evidence" value="ECO:0000304"/>
    <property type="project" value="ProtInc"/>
</dbReference>
<dbReference type="GO" id="GO:0032713">
    <property type="term" value="P:negative regulation of interleukin-4 production"/>
    <property type="evidence" value="ECO:0007669"/>
    <property type="project" value="Ensembl"/>
</dbReference>
<dbReference type="GO" id="GO:0043372">
    <property type="term" value="P:positive regulation of CD4-positive, alpha-beta T cell differentiation"/>
    <property type="evidence" value="ECO:0007669"/>
    <property type="project" value="Ensembl"/>
</dbReference>
<dbReference type="GO" id="GO:0032733">
    <property type="term" value="P:positive regulation of interleukin-10 production"/>
    <property type="evidence" value="ECO:0007669"/>
    <property type="project" value="Ensembl"/>
</dbReference>
<dbReference type="GO" id="GO:0032743">
    <property type="term" value="P:positive regulation of interleukin-2 production"/>
    <property type="evidence" value="ECO:0007669"/>
    <property type="project" value="Ensembl"/>
</dbReference>
<dbReference type="GO" id="GO:0007165">
    <property type="term" value="P:signal transduction"/>
    <property type="evidence" value="ECO:0000304"/>
    <property type="project" value="ProtInc"/>
</dbReference>
<dbReference type="FunFam" id="2.60.40.10:FF:001910">
    <property type="entry name" value="CD83 molecule"/>
    <property type="match status" value="1"/>
</dbReference>
<dbReference type="Gene3D" id="2.60.40.10">
    <property type="entry name" value="Immunoglobulins"/>
    <property type="match status" value="1"/>
</dbReference>
<dbReference type="InterPro" id="IPR007110">
    <property type="entry name" value="Ig-like_dom"/>
</dbReference>
<dbReference type="InterPro" id="IPR036179">
    <property type="entry name" value="Ig-like_dom_sf"/>
</dbReference>
<dbReference type="InterPro" id="IPR013783">
    <property type="entry name" value="Ig-like_fold"/>
</dbReference>
<dbReference type="InterPro" id="IPR003599">
    <property type="entry name" value="Ig_sub"/>
</dbReference>
<dbReference type="InterPro" id="IPR013106">
    <property type="entry name" value="Ig_V-set"/>
</dbReference>
<dbReference type="PANTHER" id="PTHR15193">
    <property type="entry name" value="CD83 ANTIGEN"/>
    <property type="match status" value="1"/>
</dbReference>
<dbReference type="PANTHER" id="PTHR15193:SF1">
    <property type="entry name" value="CD83 ANTIGEN"/>
    <property type="match status" value="1"/>
</dbReference>
<dbReference type="Pfam" id="PF07686">
    <property type="entry name" value="V-set"/>
    <property type="match status" value="1"/>
</dbReference>
<dbReference type="SMART" id="SM00409">
    <property type="entry name" value="IG"/>
    <property type="match status" value="1"/>
</dbReference>
<dbReference type="SUPFAM" id="SSF48726">
    <property type="entry name" value="Immunoglobulin"/>
    <property type="match status" value="1"/>
</dbReference>
<dbReference type="PROSITE" id="PS50835">
    <property type="entry name" value="IG_LIKE"/>
    <property type="match status" value="1"/>
</dbReference>
<comment type="function">
    <text evidence="1 7">Transmembrane glycoprotein predominantly found on the surface of many immune cells including dendritic cells or lymphocytes that plays various roles in immune response regulation. Plays an essential role in CD4(+) T-selection, differentiation and stability by regulating the activity of the major E3 ubiquitin ligase responsible for controlling MHCII trafficking MARCHF8. Also inhibits MARCHF1 association with MHCII or CD86 to prevent their ubiquitination and subsequent degradation (PubMed:21220452). In addition, acts as an important modulator of protective responses against acute infections (By similarity).</text>
</comment>
<comment type="subunit">
    <text evidence="7 8">Monomer. Homodimer (PubMed:28315353). Homotrimer (PubMed:28315353). Interacts with MARCHF1; this interaction antagonizes MARCHF1-mediated MHC II and CD86 down-regulation (PubMed:21220452).</text>
</comment>
<comment type="interaction">
    <interactant intactId="EBI-2873723">
        <id>Q01151</id>
    </interactant>
    <interactant intactId="EBI-743099">
        <id>Q969F0</id>
        <label>FATE1</label>
    </interactant>
    <organismsDiffer>false</organismsDiffer>
    <experiments>3</experiments>
</comment>
<comment type="subcellular location">
    <subcellularLocation>
        <location>Membrane</location>
        <topology>Single-pass type I membrane protein</topology>
    </subcellularLocation>
</comment>
<comment type="tissue specificity">
    <text evidence="4">Expressed by activated lymphocytes, Langerhans cells and activatd dendritic cells.</text>
</comment>
<comment type="induction">
    <text evidence="7">Strongly up-regulated together with costimulatory molecules such as CD80 and CD86 during dendritic cell maturation.</text>
</comment>
<comment type="PTM">
    <text evidence="4">Glycosylated when expressed on activated dendritic cells.</text>
</comment>
<comment type="online information" name="Functional Glycomics Gateway - Glycan Binding">
    <link uri="http://www.functionalglycomics.org/glycomics/GBPServlet?&amp;operationType=view&amp;cbpId=cbp_hum_Other_00148"/>
    <text>CD83 antigen</text>
</comment>
<proteinExistence type="evidence at protein level"/>
<name>CD83_HUMAN</name>
<sequence>MSRGLQLLLLSCAYSLAPATPEVKVACSEDVDLPCTAPWDPQVPYTVSWVKLLEGGEERMETPQEDHLRGQHYHQKGQNGSFDAPNERPYSLKIRNTTSCNSGTYRCTLQDPDGQRNLSGKVILRVTGCPAQRKEETFKKYRAEIVLLLALVIFYLTLIIFTCKFARLQSIFPDFSKAGMERAFLPVTSPNKHLGLVTPHKTELV</sequence>
<keyword id="KW-0002">3D-structure</keyword>
<keyword id="KW-0903">Direct protein sequencing</keyword>
<keyword id="KW-1015">Disulfide bond</keyword>
<keyword id="KW-0325">Glycoprotein</keyword>
<keyword id="KW-0393">Immunoglobulin domain</keyword>
<keyword id="KW-0472">Membrane</keyword>
<keyword id="KW-1267">Proteomics identification</keyword>
<keyword id="KW-1185">Reference proteome</keyword>
<keyword id="KW-0732">Signal</keyword>
<keyword id="KW-0812">Transmembrane</keyword>
<keyword id="KW-1133">Transmembrane helix</keyword>
<gene>
    <name type="primary">CD83</name>
</gene>
<protein>
    <recommendedName>
        <fullName>CD83 antigen</fullName>
        <shortName>hCD83</shortName>
    </recommendedName>
    <alternativeName>
        <fullName>B-cell activation protein</fullName>
    </alternativeName>
    <alternativeName>
        <fullName>Cell surface protein HB15</fullName>
    </alternativeName>
    <cdAntigenName>CD83</cdAntigenName>
</protein>